<proteinExistence type="inferred from homology"/>
<protein>
    <recommendedName>
        <fullName evidence="1">FMN reductase (NADH) RutF</fullName>
        <ecNumber evidence="1">1.5.1.42</ecNumber>
    </recommendedName>
    <alternativeName>
        <fullName evidence="1">FMN reductase</fullName>
    </alternativeName>
    <alternativeName>
        <fullName evidence="1">NADH-flavin reductase RutF</fullName>
    </alternativeName>
    <alternativeName>
        <fullName evidence="1">NADH:flavin oxidoreductase</fullName>
    </alternativeName>
</protein>
<dbReference type="EC" id="1.5.1.42" evidence="1"/>
<dbReference type="EMBL" id="CP001368">
    <property type="protein sequence ID" value="ACT71024.1"/>
    <property type="molecule type" value="Genomic_DNA"/>
</dbReference>
<dbReference type="RefSeq" id="WP_001028088.1">
    <property type="nucleotide sequence ID" value="NC_013008.1"/>
</dbReference>
<dbReference type="SMR" id="C6UPM9"/>
<dbReference type="KEGG" id="etw:ECSP_1176"/>
<dbReference type="HOGENOM" id="CLU_059021_2_2_6"/>
<dbReference type="GO" id="GO:0010181">
    <property type="term" value="F:FMN binding"/>
    <property type="evidence" value="ECO:0007669"/>
    <property type="project" value="InterPro"/>
</dbReference>
<dbReference type="GO" id="GO:0052874">
    <property type="term" value="F:FMN reductase (NADH) activity"/>
    <property type="evidence" value="ECO:0007669"/>
    <property type="project" value="UniProtKB-EC"/>
</dbReference>
<dbReference type="GO" id="GO:0008752">
    <property type="term" value="F:FMN reductase [NAD(P)H] activity"/>
    <property type="evidence" value="ECO:0007669"/>
    <property type="project" value="InterPro"/>
</dbReference>
<dbReference type="GO" id="GO:0042602">
    <property type="term" value="F:riboflavin reductase (NADPH) activity"/>
    <property type="evidence" value="ECO:0007669"/>
    <property type="project" value="UniProtKB-UniRule"/>
</dbReference>
<dbReference type="GO" id="GO:0019740">
    <property type="term" value="P:nitrogen utilization"/>
    <property type="evidence" value="ECO:0007669"/>
    <property type="project" value="UniProtKB-UniRule"/>
</dbReference>
<dbReference type="GO" id="GO:0006212">
    <property type="term" value="P:uracil catabolic process"/>
    <property type="evidence" value="ECO:0007669"/>
    <property type="project" value="UniProtKB-UniRule"/>
</dbReference>
<dbReference type="FunFam" id="2.30.110.10:FF:000002">
    <property type="entry name" value="FMN reductase (NADH) RutF"/>
    <property type="match status" value="1"/>
</dbReference>
<dbReference type="Gene3D" id="2.30.110.10">
    <property type="entry name" value="Electron Transport, Fmn-binding Protein, Chain A"/>
    <property type="match status" value="1"/>
</dbReference>
<dbReference type="HAMAP" id="MF_00833">
    <property type="entry name" value="RutF"/>
    <property type="match status" value="1"/>
</dbReference>
<dbReference type="InterPro" id="IPR002563">
    <property type="entry name" value="Flavin_Rdtase-like_dom"/>
</dbReference>
<dbReference type="InterPro" id="IPR050268">
    <property type="entry name" value="NADH-dep_flavin_reductase"/>
</dbReference>
<dbReference type="InterPro" id="IPR019917">
    <property type="entry name" value="RutF"/>
</dbReference>
<dbReference type="InterPro" id="IPR012349">
    <property type="entry name" value="Split_barrel_FMN-bd"/>
</dbReference>
<dbReference type="NCBIfam" id="TIGR03615">
    <property type="entry name" value="RutF"/>
    <property type="match status" value="1"/>
</dbReference>
<dbReference type="PANTHER" id="PTHR30466">
    <property type="entry name" value="FLAVIN REDUCTASE"/>
    <property type="match status" value="1"/>
</dbReference>
<dbReference type="PANTHER" id="PTHR30466:SF1">
    <property type="entry name" value="FMN REDUCTASE (NADH) RUTF"/>
    <property type="match status" value="1"/>
</dbReference>
<dbReference type="Pfam" id="PF01613">
    <property type="entry name" value="Flavin_Reduct"/>
    <property type="match status" value="1"/>
</dbReference>
<dbReference type="SMART" id="SM00903">
    <property type="entry name" value="Flavin_Reduct"/>
    <property type="match status" value="1"/>
</dbReference>
<dbReference type="SUPFAM" id="SSF50475">
    <property type="entry name" value="FMN-binding split barrel"/>
    <property type="match status" value="1"/>
</dbReference>
<sequence length="164" mass="17760">MNIVDQQTFRDAMSCMGAAVNIITTDGPAGRAGFTASAVCSVTDTPPTLLVCLNRGASVWPVFNENRTLCVNTLSAGQEPLSNLFGGKTPMEHRFAAARWQNGVTGCPQLEEALVSFDCRISQVVSVGTHDILFCAIEAIHRHATPYGLVWFDRSYHALMRPAC</sequence>
<feature type="chain" id="PRO_0000403014" description="FMN reductase (NADH) RutF">
    <location>
        <begin position="1"/>
        <end position="164"/>
    </location>
</feature>
<gene>
    <name evidence="1" type="primary">rutF</name>
    <name type="ordered locus">ECSP_1176</name>
</gene>
<accession>C6UPM9</accession>
<comment type="function">
    <text evidence="1">Catalyzes the reduction of FMN to FMNH2 which is used to reduce pyrimidine by RutA via the Rut pathway.</text>
</comment>
<comment type="catalytic activity">
    <reaction evidence="1">
        <text>FMNH2 + NAD(+) = FMN + NADH + 2 H(+)</text>
        <dbReference type="Rhea" id="RHEA:21620"/>
        <dbReference type="ChEBI" id="CHEBI:15378"/>
        <dbReference type="ChEBI" id="CHEBI:57540"/>
        <dbReference type="ChEBI" id="CHEBI:57618"/>
        <dbReference type="ChEBI" id="CHEBI:57945"/>
        <dbReference type="ChEBI" id="CHEBI:58210"/>
        <dbReference type="EC" id="1.5.1.42"/>
    </reaction>
</comment>
<comment type="induction">
    <text evidence="1">Up-regulated by the nitrogen regulatory protein C (NtrC also called GlnG) and repressed by RutR.</text>
</comment>
<comment type="similarity">
    <text evidence="1">Belongs to the non-flavoprotein flavin reductase family. RutF subfamily.</text>
</comment>
<keyword id="KW-0285">Flavoprotein</keyword>
<keyword id="KW-0288">FMN</keyword>
<keyword id="KW-0520">NAD</keyword>
<keyword id="KW-0560">Oxidoreductase</keyword>
<name>RUTF_ECO5T</name>
<organism>
    <name type="scientific">Escherichia coli O157:H7 (strain TW14359 / EHEC)</name>
    <dbReference type="NCBI Taxonomy" id="544404"/>
    <lineage>
        <taxon>Bacteria</taxon>
        <taxon>Pseudomonadati</taxon>
        <taxon>Pseudomonadota</taxon>
        <taxon>Gammaproteobacteria</taxon>
        <taxon>Enterobacterales</taxon>
        <taxon>Enterobacteriaceae</taxon>
        <taxon>Escherichia</taxon>
    </lineage>
</organism>
<evidence type="ECO:0000255" key="1">
    <source>
        <dbReference type="HAMAP-Rule" id="MF_00833"/>
    </source>
</evidence>
<reference key="1">
    <citation type="journal article" date="2009" name="Infect. Immun.">
        <title>Analysis of the genome of the Escherichia coli O157:H7 2006 spinach-associated outbreak isolate indicates candidate genes that may enhance virulence.</title>
        <authorList>
            <person name="Kulasekara B.R."/>
            <person name="Jacobs M."/>
            <person name="Zhou Y."/>
            <person name="Wu Z."/>
            <person name="Sims E."/>
            <person name="Saenphimmachak C."/>
            <person name="Rohmer L."/>
            <person name="Ritchie J.M."/>
            <person name="Radey M."/>
            <person name="McKevitt M."/>
            <person name="Freeman T.L."/>
            <person name="Hayden H."/>
            <person name="Haugen E."/>
            <person name="Gillett W."/>
            <person name="Fong C."/>
            <person name="Chang J."/>
            <person name="Beskhlebnaya V."/>
            <person name="Waldor M.K."/>
            <person name="Samadpour M."/>
            <person name="Whittam T.S."/>
            <person name="Kaul R."/>
            <person name="Brittnacher M."/>
            <person name="Miller S.I."/>
        </authorList>
    </citation>
    <scope>NUCLEOTIDE SEQUENCE [LARGE SCALE GENOMIC DNA]</scope>
    <source>
        <strain>TW14359 / EHEC</strain>
    </source>
</reference>